<evidence type="ECO:0000255" key="1">
    <source>
        <dbReference type="HAMAP-Rule" id="MF_00059"/>
    </source>
</evidence>
<sequence>MTTFLAKNWSSLIKPTKVQYEAVDNNPNIKTMVVEPLERGLGLTLGNSLRRVLLSSLRGAAITSIKIPGVEHELSPVSGVKEDLTDIILNIRDVIVKMDSVQKCNLRLEVTGPAVVTAGMITVTDKQDVTILNPQHVICNLSKGFNLEMDLICEQGKGYVPTSCLHNSDSPIGAIHLDALFNPVRRVSYKVENSMVGQMTNYDKLIITVETNGVVNPDAALGLAARILLDQLQVFINFQEVEEEKPEKLELQTINPVLLKKVYELELSVRSQNCLKNENIVYVGDLVARTETQMLKTANFGRKSLNELKKVLANFNLEFGMKDIGWPPENLESLAKKHEDQY</sequence>
<protein>
    <recommendedName>
        <fullName evidence="1">DNA-directed RNA polymerase subunit alpha</fullName>
        <shortName evidence="1">RNAP subunit alpha</shortName>
        <ecNumber evidence="1">2.7.7.6</ecNumber>
    </recommendedName>
    <alternativeName>
        <fullName evidence="1">RNA polymerase subunit alpha</fullName>
    </alternativeName>
    <alternativeName>
        <fullName evidence="1">Transcriptase subunit alpha</fullName>
    </alternativeName>
</protein>
<organism>
    <name type="scientific">Orientia tsutsugamushi (strain Ikeda)</name>
    <name type="common">Rickettsia tsutsugamushi</name>
    <dbReference type="NCBI Taxonomy" id="334380"/>
    <lineage>
        <taxon>Bacteria</taxon>
        <taxon>Pseudomonadati</taxon>
        <taxon>Pseudomonadota</taxon>
        <taxon>Alphaproteobacteria</taxon>
        <taxon>Rickettsiales</taxon>
        <taxon>Rickettsiaceae</taxon>
        <taxon>Rickettsieae</taxon>
        <taxon>Orientia</taxon>
    </lineage>
</organism>
<gene>
    <name evidence="1" type="primary">rpoA</name>
    <name type="ordered locus">OTT_1068</name>
</gene>
<proteinExistence type="inferred from homology"/>
<reference key="1">
    <citation type="journal article" date="2008" name="DNA Res.">
        <title>The whole-genome sequencing of the obligate intracellular bacterium Orientia tsutsugamushi revealed massive gene amplification during reductive genome evolution.</title>
        <authorList>
            <person name="Nakayama K."/>
            <person name="Yamashita A."/>
            <person name="Kurokawa K."/>
            <person name="Morimoto T."/>
            <person name="Ogawa M."/>
            <person name="Fukuhara M."/>
            <person name="Urakami H."/>
            <person name="Ohnishi M."/>
            <person name="Uchiyama I."/>
            <person name="Ogura Y."/>
            <person name="Ooka T."/>
            <person name="Oshima K."/>
            <person name="Tamura A."/>
            <person name="Hattori M."/>
            <person name="Hayashi T."/>
        </authorList>
    </citation>
    <scope>NUCLEOTIDE SEQUENCE [LARGE SCALE GENOMIC DNA]</scope>
    <source>
        <strain>Ikeda</strain>
    </source>
</reference>
<comment type="function">
    <text evidence="1">DNA-dependent RNA polymerase catalyzes the transcription of DNA into RNA using the four ribonucleoside triphosphates as substrates.</text>
</comment>
<comment type="catalytic activity">
    <reaction evidence="1">
        <text>RNA(n) + a ribonucleoside 5'-triphosphate = RNA(n+1) + diphosphate</text>
        <dbReference type="Rhea" id="RHEA:21248"/>
        <dbReference type="Rhea" id="RHEA-COMP:14527"/>
        <dbReference type="Rhea" id="RHEA-COMP:17342"/>
        <dbReference type="ChEBI" id="CHEBI:33019"/>
        <dbReference type="ChEBI" id="CHEBI:61557"/>
        <dbReference type="ChEBI" id="CHEBI:140395"/>
        <dbReference type="EC" id="2.7.7.6"/>
    </reaction>
</comment>
<comment type="subunit">
    <text evidence="1">Homodimer. The RNAP catalytic core consists of 2 alpha, 1 beta, 1 beta' and 1 omega subunit. When a sigma factor is associated with the core the holoenzyme is formed, which can initiate transcription.</text>
</comment>
<comment type="domain">
    <text evidence="1">The N-terminal domain is essential for RNAP assembly and basal transcription, whereas the C-terminal domain is involved in interaction with transcriptional regulators and with upstream promoter elements.</text>
</comment>
<comment type="similarity">
    <text evidence="1">Belongs to the RNA polymerase alpha chain family.</text>
</comment>
<accession>B3CT29</accession>
<keyword id="KW-0240">DNA-directed RNA polymerase</keyword>
<keyword id="KW-0548">Nucleotidyltransferase</keyword>
<keyword id="KW-0804">Transcription</keyword>
<keyword id="KW-0808">Transferase</keyword>
<feature type="chain" id="PRO_1000091958" description="DNA-directed RNA polymerase subunit alpha">
    <location>
        <begin position="1"/>
        <end position="342"/>
    </location>
</feature>
<feature type="region of interest" description="Alpha N-terminal domain (alpha-NTD)" evidence="1">
    <location>
        <begin position="1"/>
        <end position="239"/>
    </location>
</feature>
<feature type="region of interest" description="Alpha C-terminal domain (alpha-CTD)" evidence="1">
    <location>
        <begin position="254"/>
        <end position="342"/>
    </location>
</feature>
<dbReference type="EC" id="2.7.7.6" evidence="1"/>
<dbReference type="EMBL" id="AP008981">
    <property type="protein sequence ID" value="BAG40526.1"/>
    <property type="molecule type" value="Genomic_DNA"/>
</dbReference>
<dbReference type="RefSeq" id="WP_012461628.1">
    <property type="nucleotide sequence ID" value="NC_010793.1"/>
</dbReference>
<dbReference type="SMR" id="B3CT29"/>
<dbReference type="KEGG" id="ott:OTT_1068"/>
<dbReference type="HOGENOM" id="CLU_053084_0_0_5"/>
<dbReference type="OrthoDB" id="9805706at2"/>
<dbReference type="Proteomes" id="UP000001033">
    <property type="component" value="Chromosome"/>
</dbReference>
<dbReference type="GO" id="GO:0005737">
    <property type="term" value="C:cytoplasm"/>
    <property type="evidence" value="ECO:0007669"/>
    <property type="project" value="UniProtKB-ARBA"/>
</dbReference>
<dbReference type="GO" id="GO:0000428">
    <property type="term" value="C:DNA-directed RNA polymerase complex"/>
    <property type="evidence" value="ECO:0007669"/>
    <property type="project" value="UniProtKB-KW"/>
</dbReference>
<dbReference type="GO" id="GO:0003677">
    <property type="term" value="F:DNA binding"/>
    <property type="evidence" value="ECO:0007669"/>
    <property type="project" value="UniProtKB-UniRule"/>
</dbReference>
<dbReference type="GO" id="GO:0003899">
    <property type="term" value="F:DNA-directed RNA polymerase activity"/>
    <property type="evidence" value="ECO:0007669"/>
    <property type="project" value="UniProtKB-UniRule"/>
</dbReference>
<dbReference type="GO" id="GO:0046983">
    <property type="term" value="F:protein dimerization activity"/>
    <property type="evidence" value="ECO:0007669"/>
    <property type="project" value="InterPro"/>
</dbReference>
<dbReference type="GO" id="GO:0006351">
    <property type="term" value="P:DNA-templated transcription"/>
    <property type="evidence" value="ECO:0007669"/>
    <property type="project" value="UniProtKB-UniRule"/>
</dbReference>
<dbReference type="CDD" id="cd06928">
    <property type="entry name" value="RNAP_alpha_NTD"/>
    <property type="match status" value="1"/>
</dbReference>
<dbReference type="FunFam" id="1.10.150.20:FF:000001">
    <property type="entry name" value="DNA-directed RNA polymerase subunit alpha"/>
    <property type="match status" value="1"/>
</dbReference>
<dbReference type="FunFam" id="2.170.120.12:FF:000001">
    <property type="entry name" value="DNA-directed RNA polymerase subunit alpha"/>
    <property type="match status" value="1"/>
</dbReference>
<dbReference type="Gene3D" id="1.10.150.20">
    <property type="entry name" value="5' to 3' exonuclease, C-terminal subdomain"/>
    <property type="match status" value="1"/>
</dbReference>
<dbReference type="Gene3D" id="2.170.120.12">
    <property type="entry name" value="DNA-directed RNA polymerase, insert domain"/>
    <property type="match status" value="1"/>
</dbReference>
<dbReference type="Gene3D" id="3.30.1360.10">
    <property type="entry name" value="RNA polymerase, RBP11-like subunit"/>
    <property type="match status" value="1"/>
</dbReference>
<dbReference type="HAMAP" id="MF_00059">
    <property type="entry name" value="RNApol_bact_RpoA"/>
    <property type="match status" value="1"/>
</dbReference>
<dbReference type="InterPro" id="IPR011262">
    <property type="entry name" value="DNA-dir_RNA_pol_insert"/>
</dbReference>
<dbReference type="InterPro" id="IPR011263">
    <property type="entry name" value="DNA-dir_RNA_pol_RpoA/D/Rpb3"/>
</dbReference>
<dbReference type="InterPro" id="IPR011773">
    <property type="entry name" value="DNA-dir_RpoA"/>
</dbReference>
<dbReference type="InterPro" id="IPR036603">
    <property type="entry name" value="RBP11-like"/>
</dbReference>
<dbReference type="InterPro" id="IPR011260">
    <property type="entry name" value="RNAP_asu_C"/>
</dbReference>
<dbReference type="InterPro" id="IPR036643">
    <property type="entry name" value="RNApol_insert_sf"/>
</dbReference>
<dbReference type="NCBIfam" id="NF003513">
    <property type="entry name" value="PRK05182.1-2"/>
    <property type="match status" value="1"/>
</dbReference>
<dbReference type="NCBIfam" id="NF003519">
    <property type="entry name" value="PRK05182.2-5"/>
    <property type="match status" value="1"/>
</dbReference>
<dbReference type="NCBIfam" id="TIGR02027">
    <property type="entry name" value="rpoA"/>
    <property type="match status" value="1"/>
</dbReference>
<dbReference type="Pfam" id="PF01000">
    <property type="entry name" value="RNA_pol_A_bac"/>
    <property type="match status" value="1"/>
</dbReference>
<dbReference type="Pfam" id="PF03118">
    <property type="entry name" value="RNA_pol_A_CTD"/>
    <property type="match status" value="1"/>
</dbReference>
<dbReference type="Pfam" id="PF01193">
    <property type="entry name" value="RNA_pol_L"/>
    <property type="match status" value="1"/>
</dbReference>
<dbReference type="SMART" id="SM00662">
    <property type="entry name" value="RPOLD"/>
    <property type="match status" value="1"/>
</dbReference>
<dbReference type="SUPFAM" id="SSF47789">
    <property type="entry name" value="C-terminal domain of RNA polymerase alpha subunit"/>
    <property type="match status" value="1"/>
</dbReference>
<dbReference type="SUPFAM" id="SSF56553">
    <property type="entry name" value="Insert subdomain of RNA polymerase alpha subunit"/>
    <property type="match status" value="1"/>
</dbReference>
<dbReference type="SUPFAM" id="SSF55257">
    <property type="entry name" value="RBP11-like subunits of RNA polymerase"/>
    <property type="match status" value="1"/>
</dbReference>
<name>RPOA_ORITI</name>